<name>G3P_ZYMMO</name>
<feature type="chain" id="PRO_0000145714" description="Glyceraldehyde-3-phosphate dehydrogenase">
    <location>
        <begin position="1"/>
        <end position="337"/>
    </location>
</feature>
<feature type="active site" description="Nucleophile" evidence="1">
    <location>
        <position position="154"/>
    </location>
</feature>
<feature type="binding site" evidence="1">
    <location>
        <begin position="12"/>
        <end position="13"/>
    </location>
    <ligand>
        <name>NAD(+)</name>
        <dbReference type="ChEBI" id="CHEBI:57540"/>
    </ligand>
</feature>
<feature type="binding site" evidence="1">
    <location>
        <position position="36"/>
    </location>
    <ligand>
        <name>NAD(+)</name>
        <dbReference type="ChEBI" id="CHEBI:57540"/>
    </ligand>
</feature>
<feature type="binding site" evidence="1">
    <location>
        <position position="80"/>
    </location>
    <ligand>
        <name>NAD(+)</name>
        <dbReference type="ChEBI" id="CHEBI:57540"/>
    </ligand>
</feature>
<feature type="binding site" evidence="1">
    <location>
        <position position="122"/>
    </location>
    <ligand>
        <name>NAD(+)</name>
        <dbReference type="ChEBI" id="CHEBI:57540"/>
    </ligand>
</feature>
<feature type="binding site" evidence="1">
    <location>
        <begin position="153"/>
        <end position="155"/>
    </location>
    <ligand>
        <name>D-glyceraldehyde 3-phosphate</name>
        <dbReference type="ChEBI" id="CHEBI:59776"/>
    </ligand>
</feature>
<feature type="binding site" evidence="1">
    <location>
        <position position="184"/>
    </location>
    <ligand>
        <name>D-glyceraldehyde 3-phosphate</name>
        <dbReference type="ChEBI" id="CHEBI:59776"/>
    </ligand>
</feature>
<feature type="binding site" evidence="1">
    <location>
        <position position="185"/>
    </location>
    <ligand>
        <name>NAD(+)</name>
        <dbReference type="ChEBI" id="CHEBI:57540"/>
    </ligand>
</feature>
<feature type="binding site" evidence="1">
    <location>
        <position position="199"/>
    </location>
    <ligand>
        <name>D-glyceraldehyde 3-phosphate</name>
        <dbReference type="ChEBI" id="CHEBI:59776"/>
    </ligand>
</feature>
<feature type="binding site" evidence="1">
    <location>
        <begin position="212"/>
        <end position="213"/>
    </location>
    <ligand>
        <name>D-glyceraldehyde 3-phosphate</name>
        <dbReference type="ChEBI" id="CHEBI:59776"/>
    </ligand>
</feature>
<feature type="binding site" evidence="1">
    <location>
        <position position="235"/>
    </location>
    <ligand>
        <name>D-glyceraldehyde 3-phosphate</name>
        <dbReference type="ChEBI" id="CHEBI:59776"/>
    </ligand>
</feature>
<feature type="binding site" evidence="1">
    <location>
        <position position="318"/>
    </location>
    <ligand>
        <name>NAD(+)</name>
        <dbReference type="ChEBI" id="CHEBI:57540"/>
    </ligand>
</feature>
<feature type="site" description="Activates thiol group during catalysis" evidence="1">
    <location>
        <position position="181"/>
    </location>
</feature>
<keyword id="KW-0963">Cytoplasm</keyword>
<keyword id="KW-0324">Glycolysis</keyword>
<keyword id="KW-0520">NAD</keyword>
<keyword id="KW-0547">Nucleotide-binding</keyword>
<keyword id="KW-0560">Oxidoreductase</keyword>
<keyword id="KW-1185">Reference proteome</keyword>
<dbReference type="EC" id="1.2.1.12" evidence="1"/>
<dbReference type="EMBL" id="M18802">
    <property type="protein sequence ID" value="AAA27688.1"/>
    <property type="molecule type" value="Genomic_DNA"/>
</dbReference>
<dbReference type="EMBL" id="AE008692">
    <property type="protein sequence ID" value="AAV88801.1"/>
    <property type="molecule type" value="Genomic_DNA"/>
</dbReference>
<dbReference type="PIR" id="A28386">
    <property type="entry name" value="DEZYG3"/>
</dbReference>
<dbReference type="RefSeq" id="WP_011240132.1">
    <property type="nucleotide sequence ID" value="NZ_CP035711.1"/>
</dbReference>
<dbReference type="SMR" id="P09316"/>
<dbReference type="STRING" id="264203.ZMO0177"/>
<dbReference type="GeneID" id="79904585"/>
<dbReference type="KEGG" id="zmo:ZMO0177"/>
<dbReference type="eggNOG" id="COG0057">
    <property type="taxonomic scope" value="Bacteria"/>
</dbReference>
<dbReference type="HOGENOM" id="CLU_030140_0_2_5"/>
<dbReference type="SABIO-RK" id="P09316"/>
<dbReference type="UniPathway" id="UPA00109">
    <property type="reaction ID" value="UER00184"/>
</dbReference>
<dbReference type="Proteomes" id="UP000001173">
    <property type="component" value="Chromosome"/>
</dbReference>
<dbReference type="GO" id="GO:0005737">
    <property type="term" value="C:cytoplasm"/>
    <property type="evidence" value="ECO:0007669"/>
    <property type="project" value="UniProtKB-SubCell"/>
</dbReference>
<dbReference type="GO" id="GO:0004365">
    <property type="term" value="F:glyceraldehyde-3-phosphate dehydrogenase (NAD+) (phosphorylating) activity"/>
    <property type="evidence" value="ECO:0000250"/>
    <property type="project" value="UniProtKB"/>
</dbReference>
<dbReference type="GO" id="GO:0051287">
    <property type="term" value="F:NAD binding"/>
    <property type="evidence" value="ECO:0000250"/>
    <property type="project" value="UniProtKB"/>
</dbReference>
<dbReference type="GO" id="GO:0050661">
    <property type="term" value="F:NADP binding"/>
    <property type="evidence" value="ECO:0007669"/>
    <property type="project" value="InterPro"/>
</dbReference>
<dbReference type="GO" id="GO:0006006">
    <property type="term" value="P:glucose metabolic process"/>
    <property type="evidence" value="ECO:0007669"/>
    <property type="project" value="InterPro"/>
</dbReference>
<dbReference type="GO" id="GO:0006096">
    <property type="term" value="P:glycolytic process"/>
    <property type="evidence" value="ECO:0007669"/>
    <property type="project" value="UniProtKB-UniPathway"/>
</dbReference>
<dbReference type="CDD" id="cd18126">
    <property type="entry name" value="GAPDH_I_C"/>
    <property type="match status" value="1"/>
</dbReference>
<dbReference type="CDD" id="cd05214">
    <property type="entry name" value="GAPDH_I_N"/>
    <property type="match status" value="1"/>
</dbReference>
<dbReference type="FunFam" id="3.30.360.10:FF:000002">
    <property type="entry name" value="Glyceraldehyde-3-phosphate dehydrogenase"/>
    <property type="match status" value="1"/>
</dbReference>
<dbReference type="FunFam" id="3.40.50.720:FF:000001">
    <property type="entry name" value="Glyceraldehyde-3-phosphate dehydrogenase"/>
    <property type="match status" value="1"/>
</dbReference>
<dbReference type="Gene3D" id="3.30.360.10">
    <property type="entry name" value="Dihydrodipicolinate Reductase, domain 2"/>
    <property type="match status" value="1"/>
</dbReference>
<dbReference type="Gene3D" id="3.40.50.720">
    <property type="entry name" value="NAD(P)-binding Rossmann-like Domain"/>
    <property type="match status" value="1"/>
</dbReference>
<dbReference type="InterPro" id="IPR020831">
    <property type="entry name" value="GlycerAld/Erythrose_P_DH"/>
</dbReference>
<dbReference type="InterPro" id="IPR020830">
    <property type="entry name" value="GlycerAld_3-P_DH_AS"/>
</dbReference>
<dbReference type="InterPro" id="IPR020829">
    <property type="entry name" value="GlycerAld_3-P_DH_cat"/>
</dbReference>
<dbReference type="InterPro" id="IPR020828">
    <property type="entry name" value="GlycerAld_3-P_DH_NAD(P)-bd"/>
</dbReference>
<dbReference type="InterPro" id="IPR006424">
    <property type="entry name" value="Glyceraldehyde-3-P_DH_1"/>
</dbReference>
<dbReference type="InterPro" id="IPR036291">
    <property type="entry name" value="NAD(P)-bd_dom_sf"/>
</dbReference>
<dbReference type="NCBIfam" id="TIGR01534">
    <property type="entry name" value="GAPDH-I"/>
    <property type="match status" value="1"/>
</dbReference>
<dbReference type="PANTHER" id="PTHR43148">
    <property type="entry name" value="GLYCERALDEHYDE-3-PHOSPHATE DEHYDROGENASE 2"/>
    <property type="match status" value="1"/>
</dbReference>
<dbReference type="Pfam" id="PF02800">
    <property type="entry name" value="Gp_dh_C"/>
    <property type="match status" value="1"/>
</dbReference>
<dbReference type="Pfam" id="PF00044">
    <property type="entry name" value="Gp_dh_N"/>
    <property type="match status" value="1"/>
</dbReference>
<dbReference type="PIRSF" id="PIRSF000149">
    <property type="entry name" value="GAP_DH"/>
    <property type="match status" value="1"/>
</dbReference>
<dbReference type="PRINTS" id="PR00078">
    <property type="entry name" value="G3PDHDRGNASE"/>
</dbReference>
<dbReference type="SMART" id="SM00846">
    <property type="entry name" value="Gp_dh_N"/>
    <property type="match status" value="1"/>
</dbReference>
<dbReference type="SUPFAM" id="SSF55347">
    <property type="entry name" value="Glyceraldehyde-3-phosphate dehydrogenase-like, C-terminal domain"/>
    <property type="match status" value="1"/>
</dbReference>
<dbReference type="SUPFAM" id="SSF51735">
    <property type="entry name" value="NAD(P)-binding Rossmann-fold domains"/>
    <property type="match status" value="1"/>
</dbReference>
<dbReference type="PROSITE" id="PS00071">
    <property type="entry name" value="GAPDH"/>
    <property type="match status" value="1"/>
</dbReference>
<sequence>MAVKVAINGFGRIGRLAARAILSRPDSGLELVTINDLGSVEGNAFLFKRDSAHGTYPGTVTTEGNDMVIDGKKIVVTAERDPANLPHKKLGVDIVMECTGIFTNTEKASAHLTAGAKKVLISAPAKGDVDRTVVYGVNHKDLTADDKIVSNASCTTNCLAPVLHVLQQKIGIVRGLMTTVHSFTNDQRILDQIHSDLRRARTASASMIPTSTGAARAVALVIPELKGKLDGISIRVPTPDVSLVDFTFVPQRDTTAEEINSVLKAAADTGDMTGVLGYTDEPLVSRDFYSDPHSSTVDSRETAVLEGKLARVVAWYDNEWGFSNRMVDTAAQMAKTL</sequence>
<organism>
    <name type="scientific">Zymomonas mobilis subsp. mobilis (strain ATCC 31821 / ZM4 / CP4)</name>
    <dbReference type="NCBI Taxonomy" id="264203"/>
    <lineage>
        <taxon>Bacteria</taxon>
        <taxon>Pseudomonadati</taxon>
        <taxon>Pseudomonadota</taxon>
        <taxon>Alphaproteobacteria</taxon>
        <taxon>Sphingomonadales</taxon>
        <taxon>Zymomonadaceae</taxon>
        <taxon>Zymomonas</taxon>
    </lineage>
</organism>
<accession>P09316</accession>
<accession>Q5NR53</accession>
<proteinExistence type="inferred from homology"/>
<reference key="1">
    <citation type="journal article" date="1987" name="J. Bacteriol.">
        <title>Glyceraldehyde-3-phosphate dehydrogenase gene from Zymomonas mobilis: cloning, sequencing, and identification of promoter region.</title>
        <authorList>
            <person name="Conway T."/>
            <person name="Sewell G.W."/>
            <person name="Ingram L.O."/>
        </authorList>
    </citation>
    <scope>NUCLEOTIDE SEQUENCE [GENOMIC DNA]</scope>
</reference>
<reference key="2">
    <citation type="journal article" date="2005" name="Nat. Biotechnol.">
        <title>The genome sequence of the ethanologenic bacterium Zymomonas mobilis ZM4.</title>
        <authorList>
            <person name="Seo J.-S."/>
            <person name="Chong H."/>
            <person name="Park H.S."/>
            <person name="Yoon K.-O."/>
            <person name="Jung C."/>
            <person name="Kim J.J."/>
            <person name="Hong J.H."/>
            <person name="Kim H."/>
            <person name="Kim J.-H."/>
            <person name="Kil J.-I."/>
            <person name="Park C.J."/>
            <person name="Oh H.-M."/>
            <person name="Lee J.-S."/>
            <person name="Jin S.-J."/>
            <person name="Um H.-W."/>
            <person name="Lee H.-J."/>
            <person name="Oh S.-J."/>
            <person name="Kim J.Y."/>
            <person name="Kang H.L."/>
            <person name="Lee S.Y."/>
            <person name="Lee K.J."/>
            <person name="Kang H.S."/>
        </authorList>
    </citation>
    <scope>NUCLEOTIDE SEQUENCE [LARGE SCALE GENOMIC DNA]</scope>
    <source>
        <strain>ATCC 31821 / ZM4 / CP4</strain>
    </source>
</reference>
<comment type="function">
    <text evidence="1">Catalyzes the oxidative phosphorylation of glyceraldehyde 3-phosphate (G3P) to 1,3-bisphosphoglycerate (BPG) using the cofactor NAD. The first reaction step involves the formation of a hemiacetal intermediate between G3P and a cysteine residue, and this hemiacetal intermediate is then oxidized to a thioester, with concomitant reduction of NAD to NADH. The reduced NADH is then exchanged with the second NAD, and the thioester is attacked by a nucleophilic inorganic phosphate to produce BPG.</text>
</comment>
<comment type="catalytic activity">
    <reaction evidence="1">
        <text>D-glyceraldehyde 3-phosphate + phosphate + NAD(+) = (2R)-3-phospho-glyceroyl phosphate + NADH + H(+)</text>
        <dbReference type="Rhea" id="RHEA:10300"/>
        <dbReference type="ChEBI" id="CHEBI:15378"/>
        <dbReference type="ChEBI" id="CHEBI:43474"/>
        <dbReference type="ChEBI" id="CHEBI:57540"/>
        <dbReference type="ChEBI" id="CHEBI:57604"/>
        <dbReference type="ChEBI" id="CHEBI:57945"/>
        <dbReference type="ChEBI" id="CHEBI:59776"/>
        <dbReference type="EC" id="1.2.1.12"/>
    </reaction>
</comment>
<comment type="pathway">
    <text evidence="2">Carbohydrate degradation; glycolysis; pyruvate from D-glyceraldehyde 3-phosphate: step 1/5.</text>
</comment>
<comment type="subunit">
    <text evidence="1">Homotetramer.</text>
</comment>
<comment type="subcellular location">
    <subcellularLocation>
        <location evidence="2">Cytoplasm</location>
    </subcellularLocation>
</comment>
<comment type="similarity">
    <text evidence="2">Belongs to the glyceraldehyde-3-phosphate dehydrogenase family.</text>
</comment>
<gene>
    <name type="primary">gap</name>
    <name type="ordered locus">ZMO0177</name>
</gene>
<evidence type="ECO:0000250" key="1">
    <source>
        <dbReference type="UniProtKB" id="P0A9B2"/>
    </source>
</evidence>
<evidence type="ECO:0000305" key="2"/>
<protein>
    <recommendedName>
        <fullName evidence="1">Glyceraldehyde-3-phosphate dehydrogenase</fullName>
        <shortName evidence="1">GAPDH</shortName>
        <ecNumber evidence="1">1.2.1.12</ecNumber>
    </recommendedName>
    <alternativeName>
        <fullName evidence="1">NAD-dependent glyceraldehyde-3-phosphate dehydrogenase</fullName>
    </alternativeName>
</protein>